<protein>
    <recommendedName>
        <fullName evidence="1">ATP synthase subunit b</fullName>
    </recommendedName>
    <alternativeName>
        <fullName evidence="1">ATP synthase F(0) sector subunit b</fullName>
    </alternativeName>
    <alternativeName>
        <fullName evidence="1">ATPase subunit I</fullName>
    </alternativeName>
    <alternativeName>
        <fullName evidence="1">F-type ATPase subunit b</fullName>
        <shortName evidence="1">F-ATPase subunit b</shortName>
    </alternativeName>
</protein>
<dbReference type="EMBL" id="AP009178">
    <property type="protein sequence ID" value="BAF70333.1"/>
    <property type="molecule type" value="Genomic_DNA"/>
</dbReference>
<dbReference type="RefSeq" id="WP_012082596.1">
    <property type="nucleotide sequence ID" value="NC_009662.1"/>
</dbReference>
<dbReference type="SMR" id="A6Q4C4"/>
<dbReference type="STRING" id="387092.NIS_1224"/>
<dbReference type="KEGG" id="nis:NIS_1224"/>
<dbReference type="eggNOG" id="COG0711">
    <property type="taxonomic scope" value="Bacteria"/>
</dbReference>
<dbReference type="HOGENOM" id="CLU_129781_0_0_7"/>
<dbReference type="InParanoid" id="A6Q4C4"/>
<dbReference type="Proteomes" id="UP000001118">
    <property type="component" value="Chromosome"/>
</dbReference>
<dbReference type="GO" id="GO:0005886">
    <property type="term" value="C:plasma membrane"/>
    <property type="evidence" value="ECO:0007669"/>
    <property type="project" value="UniProtKB-SubCell"/>
</dbReference>
<dbReference type="GO" id="GO:0045259">
    <property type="term" value="C:proton-transporting ATP synthase complex"/>
    <property type="evidence" value="ECO:0007669"/>
    <property type="project" value="UniProtKB-KW"/>
</dbReference>
<dbReference type="GO" id="GO:0046933">
    <property type="term" value="F:proton-transporting ATP synthase activity, rotational mechanism"/>
    <property type="evidence" value="ECO:0007669"/>
    <property type="project" value="UniProtKB-UniRule"/>
</dbReference>
<dbReference type="GO" id="GO:0046961">
    <property type="term" value="F:proton-transporting ATPase activity, rotational mechanism"/>
    <property type="evidence" value="ECO:0007669"/>
    <property type="project" value="TreeGrafter"/>
</dbReference>
<dbReference type="CDD" id="cd06503">
    <property type="entry name" value="ATP-synt_Fo_b"/>
    <property type="match status" value="1"/>
</dbReference>
<dbReference type="HAMAP" id="MF_01398">
    <property type="entry name" value="ATP_synth_b_bprime"/>
    <property type="match status" value="1"/>
</dbReference>
<dbReference type="InterPro" id="IPR002146">
    <property type="entry name" value="ATP_synth_b/b'su_bac/chlpt"/>
</dbReference>
<dbReference type="InterPro" id="IPR050059">
    <property type="entry name" value="ATP_synthase_B_chain"/>
</dbReference>
<dbReference type="NCBIfam" id="NF006292">
    <property type="entry name" value="PRK08475.1"/>
    <property type="match status" value="1"/>
</dbReference>
<dbReference type="PANTHER" id="PTHR33445">
    <property type="entry name" value="ATP SYNTHASE SUBUNIT B', CHLOROPLASTIC"/>
    <property type="match status" value="1"/>
</dbReference>
<dbReference type="PANTHER" id="PTHR33445:SF2">
    <property type="entry name" value="ATP SYNTHASE SUBUNIT B', CHLOROPLASTIC"/>
    <property type="match status" value="1"/>
</dbReference>
<dbReference type="Pfam" id="PF00430">
    <property type="entry name" value="ATP-synt_B"/>
    <property type="match status" value="1"/>
</dbReference>
<accession>A6Q4C4</accession>
<organism>
    <name type="scientific">Nitratiruptor sp. (strain SB155-2)</name>
    <dbReference type="NCBI Taxonomy" id="387092"/>
    <lineage>
        <taxon>Bacteria</taxon>
        <taxon>Pseudomonadati</taxon>
        <taxon>Campylobacterota</taxon>
        <taxon>Epsilonproteobacteria</taxon>
        <taxon>Nautiliales</taxon>
        <taxon>Nitratiruptoraceae</taxon>
        <taxon>Nitratiruptor</taxon>
    </lineage>
</organism>
<evidence type="ECO:0000255" key="1">
    <source>
        <dbReference type="HAMAP-Rule" id="MF_01398"/>
    </source>
</evidence>
<comment type="function">
    <text evidence="1">F(1)F(0) ATP synthase produces ATP from ADP in the presence of a proton or sodium gradient. F-type ATPases consist of two structural domains, F(1) containing the extramembraneous catalytic core and F(0) containing the membrane proton channel, linked together by a central stalk and a peripheral stalk. During catalysis, ATP synthesis in the catalytic domain of F(1) is coupled via a rotary mechanism of the central stalk subunits to proton translocation.</text>
</comment>
<comment type="function">
    <text evidence="1">Component of the F(0) channel, it forms part of the peripheral stalk, linking F(1) to F(0).</text>
</comment>
<comment type="subunit">
    <text evidence="1">F-type ATPases have 2 components, F(1) - the catalytic core - and F(0) - the membrane proton channel. F(1) has five subunits: alpha(3), beta(3), gamma(1), delta(1), epsilon(1). F(0) has three main subunits: a(1), b(2) and c(10-14). The alpha and beta chains form an alternating ring which encloses part of the gamma chain. F(1) is attached to F(0) by a central stalk formed by the gamma and epsilon chains, while a peripheral stalk is formed by the delta and b chains.</text>
</comment>
<comment type="subcellular location">
    <subcellularLocation>
        <location evidence="1">Cell inner membrane</location>
        <topology evidence="1">Single-pass membrane protein</topology>
    </subcellularLocation>
</comment>
<comment type="similarity">
    <text evidence="1">Belongs to the ATPase B chain family.</text>
</comment>
<proteinExistence type="inferred from homology"/>
<keyword id="KW-0066">ATP synthesis</keyword>
<keyword id="KW-0997">Cell inner membrane</keyword>
<keyword id="KW-1003">Cell membrane</keyword>
<keyword id="KW-0138">CF(0)</keyword>
<keyword id="KW-0375">Hydrogen ion transport</keyword>
<keyword id="KW-0406">Ion transport</keyword>
<keyword id="KW-0472">Membrane</keyword>
<keyword id="KW-1185">Reference proteome</keyword>
<keyword id="KW-0812">Transmembrane</keyword>
<keyword id="KW-1133">Transmembrane helix</keyword>
<keyword id="KW-0813">Transport</keyword>
<feature type="chain" id="PRO_0000368625" description="ATP synthase subunit b">
    <location>
        <begin position="1"/>
        <end position="172"/>
    </location>
</feature>
<feature type="transmembrane region" description="Helical" evidence="1">
    <location>
        <begin position="5"/>
        <end position="24"/>
    </location>
</feature>
<gene>
    <name evidence="1" type="primary">atpF</name>
    <name type="ordered locus">NIS_1224</name>
</gene>
<sequence>MKQKLLMLLLLGSVSLFANEAAASGGTDIIPRTVNFLIFAAILYYLAAEPIKRFFQERKEGIAKRLEEVEAKLKEAKEEKAQAEAELKKAKELAQEIVETAKQEIEILTKEIKEQAKQEIEMLEKSFEESMELEKRKRVRAITKEVLEELFEEKALELEKEKFVNLIVKKVA</sequence>
<reference key="1">
    <citation type="journal article" date="2007" name="Proc. Natl. Acad. Sci. U.S.A.">
        <title>Deep-sea vent epsilon-proteobacterial genomes provide insights into emergence of pathogens.</title>
        <authorList>
            <person name="Nakagawa S."/>
            <person name="Takaki Y."/>
            <person name="Shimamura S."/>
            <person name="Reysenbach A.-L."/>
            <person name="Takai K."/>
            <person name="Horikoshi K."/>
        </authorList>
    </citation>
    <scope>NUCLEOTIDE SEQUENCE [LARGE SCALE GENOMIC DNA]</scope>
    <source>
        <strain>SB155-2</strain>
    </source>
</reference>
<name>ATPF_NITSB</name>